<evidence type="ECO:0000250" key="1"/>
<evidence type="ECO:0000255" key="2"/>
<evidence type="ECO:0000255" key="3">
    <source>
        <dbReference type="PROSITE-ProRule" id="PRU00108"/>
    </source>
</evidence>
<evidence type="ECO:0000255" key="4">
    <source>
        <dbReference type="PROSITE-ProRule" id="PRU00138"/>
    </source>
</evidence>
<evidence type="ECO:0000256" key="5">
    <source>
        <dbReference type="SAM" id="MobiDB-lite"/>
    </source>
</evidence>
<evidence type="ECO:0000305" key="6"/>
<gene>
    <name type="primary">RX2</name>
    <name type="synonym">RAX2</name>
</gene>
<reference key="1">
    <citation type="journal article" date="1999" name="Mech. Dev.">
        <title>Identification of chick rax/rx genes with overlapping patterns of expression during early eye and brain development.</title>
        <authorList>
            <person name="Ohuchi H."/>
            <person name="Tomonari S."/>
            <person name="Itoh H."/>
            <person name="Mikawa T."/>
            <person name="Noji S."/>
        </authorList>
    </citation>
    <scope>NUCLEOTIDE SEQUENCE [MRNA]</scope>
</reference>
<keyword id="KW-0217">Developmental protein</keyword>
<keyword id="KW-0238">DNA-binding</keyword>
<keyword id="KW-0371">Homeobox</keyword>
<keyword id="KW-0539">Nucleus</keyword>
<keyword id="KW-1185">Reference proteome</keyword>
<keyword id="KW-0804">Transcription</keyword>
<keyword id="KW-0805">Transcription regulation</keyword>
<dbReference type="EMBL" id="AB020318">
    <property type="protein sequence ID" value="BAA84749.1"/>
    <property type="molecule type" value="mRNA"/>
</dbReference>
<dbReference type="STRING" id="9031.ENSGALP00000043973"/>
<dbReference type="PaxDb" id="9031-ENSGALP00000040726"/>
<dbReference type="VEuPathDB" id="HostDB:geneid_100677794"/>
<dbReference type="eggNOG" id="KOG0490">
    <property type="taxonomic scope" value="Eukaryota"/>
</dbReference>
<dbReference type="InParanoid" id="Q9PVX0"/>
<dbReference type="PhylomeDB" id="Q9PVX0"/>
<dbReference type="Proteomes" id="UP000000539">
    <property type="component" value="Unassembled WGS sequence"/>
</dbReference>
<dbReference type="GO" id="GO:0005634">
    <property type="term" value="C:nucleus"/>
    <property type="evidence" value="ECO:0007669"/>
    <property type="project" value="UniProtKB-SubCell"/>
</dbReference>
<dbReference type="GO" id="GO:0000981">
    <property type="term" value="F:DNA-binding transcription factor activity, RNA polymerase II-specific"/>
    <property type="evidence" value="ECO:0000318"/>
    <property type="project" value="GO_Central"/>
</dbReference>
<dbReference type="GO" id="GO:0000978">
    <property type="term" value="F:RNA polymerase II cis-regulatory region sequence-specific DNA binding"/>
    <property type="evidence" value="ECO:0000318"/>
    <property type="project" value="GO_Central"/>
</dbReference>
<dbReference type="GO" id="GO:0045944">
    <property type="term" value="P:positive regulation of transcription by RNA polymerase II"/>
    <property type="evidence" value="ECO:0007669"/>
    <property type="project" value="InterPro"/>
</dbReference>
<dbReference type="GO" id="GO:0006357">
    <property type="term" value="P:regulation of transcription by RNA polymerase II"/>
    <property type="evidence" value="ECO:0000318"/>
    <property type="project" value="GO_Central"/>
</dbReference>
<dbReference type="CDD" id="cd00086">
    <property type="entry name" value="homeodomain"/>
    <property type="match status" value="1"/>
</dbReference>
<dbReference type="FunFam" id="1.10.10.60:FF:000071">
    <property type="entry name" value="Retinal homeobox gene 2"/>
    <property type="match status" value="1"/>
</dbReference>
<dbReference type="Gene3D" id="1.10.10.60">
    <property type="entry name" value="Homeodomain-like"/>
    <property type="match status" value="1"/>
</dbReference>
<dbReference type="InterPro" id="IPR001356">
    <property type="entry name" value="HD"/>
</dbReference>
<dbReference type="InterPro" id="IPR017970">
    <property type="entry name" value="Homeobox_CS"/>
</dbReference>
<dbReference type="InterPro" id="IPR009057">
    <property type="entry name" value="Homeodomain-like_sf"/>
</dbReference>
<dbReference type="InterPro" id="IPR003654">
    <property type="entry name" value="OAR_dom"/>
</dbReference>
<dbReference type="InterPro" id="IPR043562">
    <property type="entry name" value="RAX/RAX2"/>
</dbReference>
<dbReference type="PANTHER" id="PTHR46271">
    <property type="entry name" value="HOMEOBOX PROTEIN, PUTATIVE-RELATED"/>
    <property type="match status" value="1"/>
</dbReference>
<dbReference type="PANTHER" id="PTHR46271:SF3">
    <property type="entry name" value="RETINAL HOMEOBOX PROTEIN RX"/>
    <property type="match status" value="1"/>
</dbReference>
<dbReference type="Pfam" id="PF00046">
    <property type="entry name" value="Homeodomain"/>
    <property type="match status" value="1"/>
</dbReference>
<dbReference type="Pfam" id="PF03826">
    <property type="entry name" value="OAR"/>
    <property type="match status" value="1"/>
</dbReference>
<dbReference type="SMART" id="SM00389">
    <property type="entry name" value="HOX"/>
    <property type="match status" value="1"/>
</dbReference>
<dbReference type="SUPFAM" id="SSF46689">
    <property type="entry name" value="Homeodomain-like"/>
    <property type="match status" value="1"/>
</dbReference>
<dbReference type="PROSITE" id="PS00027">
    <property type="entry name" value="HOMEOBOX_1"/>
    <property type="match status" value="1"/>
</dbReference>
<dbReference type="PROSITE" id="PS50071">
    <property type="entry name" value="HOMEOBOX_2"/>
    <property type="match status" value="1"/>
</dbReference>
<dbReference type="PROSITE" id="PS50803">
    <property type="entry name" value="OAR"/>
    <property type="match status" value="1"/>
</dbReference>
<organism>
    <name type="scientific">Gallus gallus</name>
    <name type="common">Chicken</name>
    <dbReference type="NCBI Taxonomy" id="9031"/>
    <lineage>
        <taxon>Eukaryota</taxon>
        <taxon>Metazoa</taxon>
        <taxon>Chordata</taxon>
        <taxon>Craniata</taxon>
        <taxon>Vertebrata</taxon>
        <taxon>Euteleostomi</taxon>
        <taxon>Archelosauria</taxon>
        <taxon>Archosauria</taxon>
        <taxon>Dinosauria</taxon>
        <taxon>Saurischia</taxon>
        <taxon>Theropoda</taxon>
        <taxon>Coelurosauria</taxon>
        <taxon>Aves</taxon>
        <taxon>Neognathae</taxon>
        <taxon>Galloanserae</taxon>
        <taxon>Galliformes</taxon>
        <taxon>Phasianidae</taxon>
        <taxon>Phasianinae</taxon>
        <taxon>Gallus</taxon>
    </lineage>
</organism>
<accession>Q9PVX0</accession>
<comment type="function">
    <text evidence="1">Plays a critical role in eye formation by regulating the initial specification of retinal cells and/or their subsequent proliferation.</text>
</comment>
<comment type="subcellular location">
    <subcellularLocation>
        <location evidence="3 4">Nucleus</location>
    </subcellularLocation>
</comment>
<comment type="developmental stage">
    <text>Expressed at stage 4 in the ectoderm, at stage 6 in the anterior most neural plate, at stage 7 and 8 in the anterior neural fold and at stage 9-10 in the evaginating optic vesicles. At stage 14, highly expressed in developing retina and in infundibulum region.</text>
</comment>
<comment type="similarity">
    <text evidence="6">Belongs to the paired homeobox family. Bicoid subfamily.</text>
</comment>
<proteinExistence type="evidence at transcript level"/>
<sequence length="317" mass="34057">MHPPGAPFAMAEGAFSLSAPAARSPGGNPSRLHSIEAILGFTKDDGLLGPFQPDGGAGSAKEAADKRGPRHCLPKGPAEPPPAEHQGRFQEPYCPGSASPELPAGDGGDGKPSDEEQPKKKHRRNRTTFTTYQLHELERAFEKSHYPDVYSREELAMKVNLPEVRVQVWFQNRRAKWRRQEKLEVSSMKLQDSPILSFSRSPQAAPVGALGGSLPLETWLGPPVPGGAALQSLPGFAAPPQGLPASYTPPPFLNSPAVTHALQPLGAMGPPPPYQCGAAFVDKFPLDEGDPRNTSIASLRMKAKEHIQSIGKPWQTI</sequence>
<protein>
    <recommendedName>
        <fullName>Retinal homeobox protein Rx2</fullName>
        <shortName>cRax2</shortName>
    </recommendedName>
</protein>
<feature type="chain" id="PRO_0000049281" description="Retinal homeobox protein Rx2">
    <location>
        <begin position="1"/>
        <end position="317"/>
    </location>
</feature>
<feature type="DNA-binding region" description="Homeobox" evidence="3">
    <location>
        <begin position="122"/>
        <end position="181"/>
    </location>
</feature>
<feature type="region of interest" description="Disordered" evidence="5">
    <location>
        <begin position="44"/>
        <end position="127"/>
    </location>
</feature>
<feature type="short sequence motif" description="Octapeptide motif">
    <location>
        <begin position="33"/>
        <end position="40"/>
    </location>
</feature>
<feature type="short sequence motif" description="OAR" evidence="4">
    <location>
        <begin position="294"/>
        <end position="307"/>
    </location>
</feature>
<feature type="short sequence motif" description="Nuclear localization signal" evidence="2">
    <location>
        <begin position="300"/>
        <end position="304"/>
    </location>
</feature>
<feature type="compositionally biased region" description="Basic and acidic residues" evidence="5">
    <location>
        <begin position="108"/>
        <end position="118"/>
    </location>
</feature>
<name>RX2_CHICK</name>